<organism>
    <name type="scientific">Frankia casuarinae (strain DSM 45818 / CECT 9043 / HFP020203 / CcI3)</name>
    <dbReference type="NCBI Taxonomy" id="106370"/>
    <lineage>
        <taxon>Bacteria</taxon>
        <taxon>Bacillati</taxon>
        <taxon>Actinomycetota</taxon>
        <taxon>Actinomycetes</taxon>
        <taxon>Frankiales</taxon>
        <taxon>Frankiaceae</taxon>
        <taxon>Frankia</taxon>
    </lineage>
</organism>
<reference key="1">
    <citation type="journal article" date="2007" name="Genome Res.">
        <title>Genome characteristics of facultatively symbiotic Frankia sp. strains reflect host range and host plant biogeography.</title>
        <authorList>
            <person name="Normand P."/>
            <person name="Lapierre P."/>
            <person name="Tisa L.S."/>
            <person name="Gogarten J.P."/>
            <person name="Alloisio N."/>
            <person name="Bagnarol E."/>
            <person name="Bassi C.A."/>
            <person name="Berry A.M."/>
            <person name="Bickhart D.M."/>
            <person name="Choisne N."/>
            <person name="Couloux A."/>
            <person name="Cournoyer B."/>
            <person name="Cruveiller S."/>
            <person name="Daubin V."/>
            <person name="Demange N."/>
            <person name="Francino M.P."/>
            <person name="Goltsman E."/>
            <person name="Huang Y."/>
            <person name="Kopp O.R."/>
            <person name="Labarre L."/>
            <person name="Lapidus A."/>
            <person name="Lavire C."/>
            <person name="Marechal J."/>
            <person name="Martinez M."/>
            <person name="Mastronunzio J.E."/>
            <person name="Mullin B.C."/>
            <person name="Niemann J."/>
            <person name="Pujic P."/>
            <person name="Rawnsley T."/>
            <person name="Rouy Z."/>
            <person name="Schenowitz C."/>
            <person name="Sellstedt A."/>
            <person name="Tavares F."/>
            <person name="Tomkins J.P."/>
            <person name="Vallenet D."/>
            <person name="Valverde C."/>
            <person name="Wall L.G."/>
            <person name="Wang Y."/>
            <person name="Medigue C."/>
            <person name="Benson D.R."/>
        </authorList>
    </citation>
    <scope>NUCLEOTIDE SEQUENCE [LARGE SCALE GENOMIC DNA]</scope>
    <source>
        <strain>DSM 45818 / CECT 9043 / HFP020203 / CcI3</strain>
    </source>
</reference>
<protein>
    <recommendedName>
        <fullName evidence="1">Large ribosomal subunit protein bL21</fullName>
    </recommendedName>
    <alternativeName>
        <fullName evidence="2">50S ribosomal protein L21</fullName>
    </alternativeName>
</protein>
<sequence length="105" mass="11032">MYAVVASGGKQHRVAVGDVVDVELLSGEPGAAVNLPALLLVDGESVTHDADALASVAVTAEVVGVVKGPKIRIHKFKNKTGYHKRQGHRQKLTRLKVTGIETGKA</sequence>
<gene>
    <name evidence="1" type="primary">rplU</name>
    <name type="ordered locus">Francci3_1220</name>
</gene>
<comment type="function">
    <text evidence="1">This protein binds to 23S rRNA in the presence of protein L20.</text>
</comment>
<comment type="subunit">
    <text evidence="1">Part of the 50S ribosomal subunit. Contacts protein L20.</text>
</comment>
<comment type="similarity">
    <text evidence="1">Belongs to the bacterial ribosomal protein bL21 family.</text>
</comment>
<evidence type="ECO:0000255" key="1">
    <source>
        <dbReference type="HAMAP-Rule" id="MF_01363"/>
    </source>
</evidence>
<evidence type="ECO:0000305" key="2"/>
<feature type="chain" id="PRO_0000270670" description="Large ribosomal subunit protein bL21">
    <location>
        <begin position="1"/>
        <end position="105"/>
    </location>
</feature>
<name>RL21_FRACC</name>
<keyword id="KW-1185">Reference proteome</keyword>
<keyword id="KW-0687">Ribonucleoprotein</keyword>
<keyword id="KW-0689">Ribosomal protein</keyword>
<keyword id="KW-0694">RNA-binding</keyword>
<keyword id="KW-0699">rRNA-binding</keyword>
<proteinExistence type="inferred from homology"/>
<dbReference type="EMBL" id="CP000249">
    <property type="protein sequence ID" value="ABD10598.1"/>
    <property type="molecule type" value="Genomic_DNA"/>
</dbReference>
<dbReference type="RefSeq" id="WP_011435664.1">
    <property type="nucleotide sequence ID" value="NZ_MSEA01000069.1"/>
</dbReference>
<dbReference type="SMR" id="Q2JDP4"/>
<dbReference type="STRING" id="106370.Francci3_1220"/>
<dbReference type="KEGG" id="fra:Francci3_1220"/>
<dbReference type="eggNOG" id="COG0261">
    <property type="taxonomic scope" value="Bacteria"/>
</dbReference>
<dbReference type="HOGENOM" id="CLU_061463_3_0_11"/>
<dbReference type="OrthoDB" id="9813334at2"/>
<dbReference type="PhylomeDB" id="Q2JDP4"/>
<dbReference type="Proteomes" id="UP000001937">
    <property type="component" value="Chromosome"/>
</dbReference>
<dbReference type="GO" id="GO:0005737">
    <property type="term" value="C:cytoplasm"/>
    <property type="evidence" value="ECO:0007669"/>
    <property type="project" value="UniProtKB-ARBA"/>
</dbReference>
<dbReference type="GO" id="GO:1990904">
    <property type="term" value="C:ribonucleoprotein complex"/>
    <property type="evidence" value="ECO:0007669"/>
    <property type="project" value="UniProtKB-KW"/>
</dbReference>
<dbReference type="GO" id="GO:0005840">
    <property type="term" value="C:ribosome"/>
    <property type="evidence" value="ECO:0007669"/>
    <property type="project" value="UniProtKB-KW"/>
</dbReference>
<dbReference type="GO" id="GO:0019843">
    <property type="term" value="F:rRNA binding"/>
    <property type="evidence" value="ECO:0007669"/>
    <property type="project" value="UniProtKB-UniRule"/>
</dbReference>
<dbReference type="GO" id="GO:0003735">
    <property type="term" value="F:structural constituent of ribosome"/>
    <property type="evidence" value="ECO:0007669"/>
    <property type="project" value="InterPro"/>
</dbReference>
<dbReference type="GO" id="GO:0006412">
    <property type="term" value="P:translation"/>
    <property type="evidence" value="ECO:0007669"/>
    <property type="project" value="UniProtKB-UniRule"/>
</dbReference>
<dbReference type="HAMAP" id="MF_01363">
    <property type="entry name" value="Ribosomal_bL21"/>
    <property type="match status" value="1"/>
</dbReference>
<dbReference type="InterPro" id="IPR028909">
    <property type="entry name" value="bL21-like"/>
</dbReference>
<dbReference type="InterPro" id="IPR036164">
    <property type="entry name" value="bL21-like_sf"/>
</dbReference>
<dbReference type="InterPro" id="IPR001787">
    <property type="entry name" value="Ribosomal_bL21"/>
</dbReference>
<dbReference type="InterPro" id="IPR018258">
    <property type="entry name" value="Ribosomal_bL21_CS"/>
</dbReference>
<dbReference type="NCBIfam" id="TIGR00061">
    <property type="entry name" value="L21"/>
    <property type="match status" value="1"/>
</dbReference>
<dbReference type="PANTHER" id="PTHR21349">
    <property type="entry name" value="50S RIBOSOMAL PROTEIN L21"/>
    <property type="match status" value="1"/>
</dbReference>
<dbReference type="PANTHER" id="PTHR21349:SF0">
    <property type="entry name" value="LARGE RIBOSOMAL SUBUNIT PROTEIN BL21M"/>
    <property type="match status" value="1"/>
</dbReference>
<dbReference type="Pfam" id="PF00829">
    <property type="entry name" value="Ribosomal_L21p"/>
    <property type="match status" value="1"/>
</dbReference>
<dbReference type="SUPFAM" id="SSF141091">
    <property type="entry name" value="L21p-like"/>
    <property type="match status" value="1"/>
</dbReference>
<dbReference type="PROSITE" id="PS01169">
    <property type="entry name" value="RIBOSOMAL_L21"/>
    <property type="match status" value="1"/>
</dbReference>
<accession>Q2JDP4</accession>